<keyword id="KW-0880">Kelch repeat</keyword>
<keyword id="KW-1267">Proteomics identification</keyword>
<keyword id="KW-1185">Reference proteome</keyword>
<keyword id="KW-0677">Repeat</keyword>
<gene>
    <name type="primary">KLHL23</name>
</gene>
<dbReference type="EMBL" id="AK090653">
    <property type="protein sequence ID" value="BAC03497.1"/>
    <property type="molecule type" value="mRNA"/>
</dbReference>
<dbReference type="EMBL" id="AK095131">
    <property type="protein sequence ID" value="BAC04490.1"/>
    <property type="status" value="ALT_INIT"/>
    <property type="molecule type" value="mRNA"/>
</dbReference>
<dbReference type="EMBL" id="BC010437">
    <property type="protein sequence ID" value="AAH10437.2"/>
    <property type="molecule type" value="mRNA"/>
</dbReference>
<dbReference type="RefSeq" id="NP_653312.2">
    <property type="nucleotide sequence ID" value="NM_144711.5"/>
</dbReference>
<dbReference type="SMR" id="Q8NBE8"/>
<dbReference type="BioGRID" id="127354">
    <property type="interactions" value="33"/>
</dbReference>
<dbReference type="BioGRID" id="1529322">
    <property type="interactions" value="1"/>
</dbReference>
<dbReference type="ComplexPortal" id="CPX-8123">
    <property type="entry name" value="CRL3 E3 ubiquitin ligase complex, KLHL23 variant"/>
</dbReference>
<dbReference type="FunCoup" id="Q8NBE8">
    <property type="interactions" value="334"/>
</dbReference>
<dbReference type="IntAct" id="Q8NBE8">
    <property type="interactions" value="31"/>
</dbReference>
<dbReference type="MINT" id="Q8NBE8"/>
<dbReference type="STRING" id="9606.ENSP00000376419"/>
<dbReference type="iPTMnet" id="Q8NBE8"/>
<dbReference type="PhosphoSitePlus" id="Q8NBE8"/>
<dbReference type="SwissPalm" id="Q8NBE8"/>
<dbReference type="BioMuta" id="KLHL23"/>
<dbReference type="DMDM" id="74751169"/>
<dbReference type="jPOST" id="Q8NBE8"/>
<dbReference type="MassIVE" id="Q8NBE8"/>
<dbReference type="PaxDb" id="9606-ENSP00000376419"/>
<dbReference type="PeptideAtlas" id="Q8NBE8"/>
<dbReference type="ProteomicsDB" id="72759"/>
<dbReference type="Pumba" id="Q8NBE8"/>
<dbReference type="Antibodypedia" id="33817">
    <property type="antibodies" value="75 antibodies from 16 providers"/>
</dbReference>
<dbReference type="DNASU" id="151230"/>
<dbReference type="Ensembl" id="ENST00000272797.8">
    <property type="protein sequence ID" value="ENSP00000272797.4"/>
    <property type="gene ID" value="ENSG00000213160.10"/>
</dbReference>
<dbReference type="Ensembl" id="ENST00000392647.7">
    <property type="protein sequence ID" value="ENSP00000376419.2"/>
    <property type="gene ID" value="ENSG00000213160.10"/>
</dbReference>
<dbReference type="GeneID" id="151230"/>
<dbReference type="KEGG" id="hsa:100526832"/>
<dbReference type="KEGG" id="hsa:151230"/>
<dbReference type="MANE-Select" id="ENST00000392647.7">
    <property type="protein sequence ID" value="ENSP00000376419.2"/>
    <property type="RefSeq nucleotide sequence ID" value="NM_144711.6"/>
    <property type="RefSeq protein sequence ID" value="NP_653312.2"/>
</dbReference>
<dbReference type="UCSC" id="uc002ufh.3">
    <property type="organism name" value="human"/>
</dbReference>
<dbReference type="AGR" id="HGNC:27506"/>
<dbReference type="CTD" id="100526832"/>
<dbReference type="CTD" id="151230"/>
<dbReference type="DisGeNET" id="151230"/>
<dbReference type="GeneCards" id="KLHL23"/>
<dbReference type="HGNC" id="HGNC:27506">
    <property type="gene designation" value="KLHL23"/>
</dbReference>
<dbReference type="HPA" id="ENSG00000213160">
    <property type="expression patterns" value="Low tissue specificity"/>
</dbReference>
<dbReference type="neXtProt" id="NX_Q8NBE8"/>
<dbReference type="OpenTargets" id="ENSG00000213160"/>
<dbReference type="PharmGKB" id="PA142671575"/>
<dbReference type="VEuPathDB" id="HostDB:ENSG00000213160"/>
<dbReference type="eggNOG" id="KOG4441">
    <property type="taxonomic scope" value="Eukaryota"/>
</dbReference>
<dbReference type="GeneTree" id="ENSGT00940000159106"/>
<dbReference type="HOGENOM" id="CLU_004253_14_6_1"/>
<dbReference type="InParanoid" id="Q8NBE8"/>
<dbReference type="OMA" id="HIWDPIS"/>
<dbReference type="OrthoDB" id="7956040at2759"/>
<dbReference type="PAN-GO" id="Q8NBE8">
    <property type="GO annotations" value="0 GO annotations based on evolutionary models"/>
</dbReference>
<dbReference type="PhylomeDB" id="Q8NBE8"/>
<dbReference type="TreeFam" id="TF329218"/>
<dbReference type="PathwayCommons" id="Q8NBE8"/>
<dbReference type="SignaLink" id="Q8NBE8"/>
<dbReference type="BioGRID-ORCS" id="100526832">
    <property type="hits" value="5 hits in 185 CRISPR screens"/>
</dbReference>
<dbReference type="BioGRID-ORCS" id="151230">
    <property type="hits" value="12 hits in 1175 CRISPR screens"/>
</dbReference>
<dbReference type="Pharos" id="Q8NBE8">
    <property type="development level" value="Tdark"/>
</dbReference>
<dbReference type="PRO" id="PR:Q8NBE8"/>
<dbReference type="Proteomes" id="UP000005640">
    <property type="component" value="Chromosome 2"/>
</dbReference>
<dbReference type="RNAct" id="Q8NBE8">
    <property type="molecule type" value="protein"/>
</dbReference>
<dbReference type="Bgee" id="ENSG00000213160">
    <property type="expression patterns" value="Expressed in cortical plate and 195 other cell types or tissues"/>
</dbReference>
<dbReference type="ExpressionAtlas" id="Q8NBE8">
    <property type="expression patterns" value="baseline and differential"/>
</dbReference>
<dbReference type="GO" id="GO:0031463">
    <property type="term" value="C:Cul3-RING ubiquitin ligase complex"/>
    <property type="evidence" value="ECO:0000318"/>
    <property type="project" value="GO_Central"/>
</dbReference>
<dbReference type="GO" id="GO:0005737">
    <property type="term" value="C:cytoplasm"/>
    <property type="evidence" value="ECO:0000318"/>
    <property type="project" value="GO_Central"/>
</dbReference>
<dbReference type="GO" id="GO:1990756">
    <property type="term" value="F:ubiquitin-like ligase-substrate adaptor activity"/>
    <property type="evidence" value="ECO:0000318"/>
    <property type="project" value="GO_Central"/>
</dbReference>
<dbReference type="GO" id="GO:0043161">
    <property type="term" value="P:proteasome-mediated ubiquitin-dependent protein catabolic process"/>
    <property type="evidence" value="ECO:0000318"/>
    <property type="project" value="GO_Central"/>
</dbReference>
<dbReference type="CDD" id="cd18462">
    <property type="entry name" value="BACK_KLHL23"/>
    <property type="match status" value="1"/>
</dbReference>
<dbReference type="CDD" id="cd18252">
    <property type="entry name" value="BTB_POZ_KLHL23"/>
    <property type="match status" value="1"/>
</dbReference>
<dbReference type="Gene3D" id="1.25.40.420">
    <property type="match status" value="1"/>
</dbReference>
<dbReference type="Gene3D" id="2.120.10.80">
    <property type="entry name" value="Kelch-type beta propeller"/>
    <property type="match status" value="2"/>
</dbReference>
<dbReference type="Gene3D" id="3.30.710.10">
    <property type="entry name" value="Potassium Channel Kv1.1, Chain A"/>
    <property type="match status" value="1"/>
</dbReference>
<dbReference type="InterPro" id="IPR011705">
    <property type="entry name" value="BACK"/>
</dbReference>
<dbReference type="InterPro" id="IPR017096">
    <property type="entry name" value="BTB-kelch_protein"/>
</dbReference>
<dbReference type="InterPro" id="IPR000210">
    <property type="entry name" value="BTB/POZ_dom"/>
</dbReference>
<dbReference type="InterPro" id="IPR030566">
    <property type="entry name" value="BTB_POZ_KLHL23"/>
</dbReference>
<dbReference type="InterPro" id="IPR015915">
    <property type="entry name" value="Kelch-typ_b-propeller"/>
</dbReference>
<dbReference type="InterPro" id="IPR006652">
    <property type="entry name" value="Kelch_1"/>
</dbReference>
<dbReference type="InterPro" id="IPR047068">
    <property type="entry name" value="KLHL23_BACK"/>
</dbReference>
<dbReference type="InterPro" id="IPR011333">
    <property type="entry name" value="SKP1/BTB/POZ_sf"/>
</dbReference>
<dbReference type="PANTHER" id="PTHR24412">
    <property type="entry name" value="KELCH PROTEIN"/>
    <property type="match status" value="1"/>
</dbReference>
<dbReference type="PANTHER" id="PTHR24412:SF489">
    <property type="entry name" value="RING FINGER DOMAIN AND KELCH REPEAT-CONTAINING PROTEIN DDB_G0271372"/>
    <property type="match status" value="1"/>
</dbReference>
<dbReference type="Pfam" id="PF07707">
    <property type="entry name" value="BACK"/>
    <property type="match status" value="1"/>
</dbReference>
<dbReference type="Pfam" id="PF00651">
    <property type="entry name" value="BTB"/>
    <property type="match status" value="1"/>
</dbReference>
<dbReference type="Pfam" id="PF01344">
    <property type="entry name" value="Kelch_1"/>
    <property type="match status" value="1"/>
</dbReference>
<dbReference type="Pfam" id="PF24681">
    <property type="entry name" value="Kelch_KLHDC2_KLHL20_DRC7"/>
    <property type="match status" value="1"/>
</dbReference>
<dbReference type="PIRSF" id="PIRSF037037">
    <property type="entry name" value="Kelch-like_protein_gigaxonin"/>
    <property type="match status" value="1"/>
</dbReference>
<dbReference type="SMART" id="SM00875">
    <property type="entry name" value="BACK"/>
    <property type="match status" value="1"/>
</dbReference>
<dbReference type="SMART" id="SM00225">
    <property type="entry name" value="BTB"/>
    <property type="match status" value="1"/>
</dbReference>
<dbReference type="SMART" id="SM00612">
    <property type="entry name" value="Kelch"/>
    <property type="match status" value="6"/>
</dbReference>
<dbReference type="SUPFAM" id="SSF117281">
    <property type="entry name" value="Kelch motif"/>
    <property type="match status" value="1"/>
</dbReference>
<dbReference type="SUPFAM" id="SSF54695">
    <property type="entry name" value="POZ domain"/>
    <property type="match status" value="1"/>
</dbReference>
<dbReference type="PROSITE" id="PS50097">
    <property type="entry name" value="BTB"/>
    <property type="match status" value="1"/>
</dbReference>
<sequence>MALKGQEDYIYLFKDSTHPVDFLDAFRTFYLDGLFTDITLQCPSGIIFHCHRAVLAACSNYFKAMFTADMKEKFKNKIKLSGIHHDILEGLVNYAYTSQIEITKRNVQSLLEAADLLQFLSVKKACERFLVRHLDIDNCIGMHSFAEFHVCPELEKESRRILCSKFKEVWQQEEFLEISLEKFLFILSRKNLSVWKEEAIIEPVIKWTAHDVENRIECLYNLLSYINIDIDPVYLKTALGLQRSCLLTENKIRSLIYNALNPMHKEISQRSTATMYIIGGYYWHPLSEVHIWDPLTNVWIQGAEIPDYTRESYGVTCLGPNIYVTGGYRTDNIEALDTVWIYNSESDEWTEGLPMLNARYYHCAVTLGGCVYALGGYRKGAPAEEAEFYDPLKEKWIPIANMIKGVGNATACVLHDVIYVIGGHCGYRGSCTYDKVQSYNSDINEWSLITSSPHPEYGLCSVPFENKLYLVGGQTTITECYDPEQNEWREIAPMMERRMECGAVIMNGCIYVTGGYSYSKGTYLQSIEKYDPDLNKWEIVGNLPSAMRSHGCVCVYNV</sequence>
<proteinExistence type="evidence at protein level"/>
<organism>
    <name type="scientific">Homo sapiens</name>
    <name type="common">Human</name>
    <dbReference type="NCBI Taxonomy" id="9606"/>
    <lineage>
        <taxon>Eukaryota</taxon>
        <taxon>Metazoa</taxon>
        <taxon>Chordata</taxon>
        <taxon>Craniata</taxon>
        <taxon>Vertebrata</taxon>
        <taxon>Euteleostomi</taxon>
        <taxon>Mammalia</taxon>
        <taxon>Eutheria</taxon>
        <taxon>Euarchontoglires</taxon>
        <taxon>Primates</taxon>
        <taxon>Haplorrhini</taxon>
        <taxon>Catarrhini</taxon>
        <taxon>Hominidae</taxon>
        <taxon>Homo</taxon>
    </lineage>
</organism>
<protein>
    <recommendedName>
        <fullName>Kelch-like protein 23</fullName>
    </recommendedName>
</protein>
<reference key="1">
    <citation type="journal article" date="2004" name="Nat. Genet.">
        <title>Complete sequencing and characterization of 21,243 full-length human cDNAs.</title>
        <authorList>
            <person name="Ota T."/>
            <person name="Suzuki Y."/>
            <person name="Nishikawa T."/>
            <person name="Otsuki T."/>
            <person name="Sugiyama T."/>
            <person name="Irie R."/>
            <person name="Wakamatsu A."/>
            <person name="Hayashi K."/>
            <person name="Sato H."/>
            <person name="Nagai K."/>
            <person name="Kimura K."/>
            <person name="Makita H."/>
            <person name="Sekine M."/>
            <person name="Obayashi M."/>
            <person name="Nishi T."/>
            <person name="Shibahara T."/>
            <person name="Tanaka T."/>
            <person name="Ishii S."/>
            <person name="Yamamoto J."/>
            <person name="Saito K."/>
            <person name="Kawai Y."/>
            <person name="Isono Y."/>
            <person name="Nakamura Y."/>
            <person name="Nagahari K."/>
            <person name="Murakami K."/>
            <person name="Yasuda T."/>
            <person name="Iwayanagi T."/>
            <person name="Wagatsuma M."/>
            <person name="Shiratori A."/>
            <person name="Sudo H."/>
            <person name="Hosoiri T."/>
            <person name="Kaku Y."/>
            <person name="Kodaira H."/>
            <person name="Kondo H."/>
            <person name="Sugawara M."/>
            <person name="Takahashi M."/>
            <person name="Kanda K."/>
            <person name="Yokoi T."/>
            <person name="Furuya T."/>
            <person name="Kikkawa E."/>
            <person name="Omura Y."/>
            <person name="Abe K."/>
            <person name="Kamihara K."/>
            <person name="Katsuta N."/>
            <person name="Sato K."/>
            <person name="Tanikawa M."/>
            <person name="Yamazaki M."/>
            <person name="Ninomiya K."/>
            <person name="Ishibashi T."/>
            <person name="Yamashita H."/>
            <person name="Murakawa K."/>
            <person name="Fujimori K."/>
            <person name="Tanai H."/>
            <person name="Kimata M."/>
            <person name="Watanabe M."/>
            <person name="Hiraoka S."/>
            <person name="Chiba Y."/>
            <person name="Ishida S."/>
            <person name="Ono Y."/>
            <person name="Takiguchi S."/>
            <person name="Watanabe S."/>
            <person name="Yosida M."/>
            <person name="Hotuta T."/>
            <person name="Kusano J."/>
            <person name="Kanehori K."/>
            <person name="Takahashi-Fujii A."/>
            <person name="Hara H."/>
            <person name="Tanase T.-O."/>
            <person name="Nomura Y."/>
            <person name="Togiya S."/>
            <person name="Komai F."/>
            <person name="Hara R."/>
            <person name="Takeuchi K."/>
            <person name="Arita M."/>
            <person name="Imose N."/>
            <person name="Musashino K."/>
            <person name="Yuuki H."/>
            <person name="Oshima A."/>
            <person name="Sasaki N."/>
            <person name="Aotsuka S."/>
            <person name="Yoshikawa Y."/>
            <person name="Matsunawa H."/>
            <person name="Ichihara T."/>
            <person name="Shiohata N."/>
            <person name="Sano S."/>
            <person name="Moriya S."/>
            <person name="Momiyama H."/>
            <person name="Satoh N."/>
            <person name="Takami S."/>
            <person name="Terashima Y."/>
            <person name="Suzuki O."/>
            <person name="Nakagawa S."/>
            <person name="Senoh A."/>
            <person name="Mizoguchi H."/>
            <person name="Goto Y."/>
            <person name="Shimizu F."/>
            <person name="Wakebe H."/>
            <person name="Hishigaki H."/>
            <person name="Watanabe T."/>
            <person name="Sugiyama A."/>
            <person name="Takemoto M."/>
            <person name="Kawakami B."/>
            <person name="Yamazaki M."/>
            <person name="Watanabe K."/>
            <person name="Kumagai A."/>
            <person name="Itakura S."/>
            <person name="Fukuzumi Y."/>
            <person name="Fujimori Y."/>
            <person name="Komiyama M."/>
            <person name="Tashiro H."/>
            <person name="Tanigami A."/>
            <person name="Fujiwara T."/>
            <person name="Ono T."/>
            <person name="Yamada K."/>
            <person name="Fujii Y."/>
            <person name="Ozaki K."/>
            <person name="Hirao M."/>
            <person name="Ohmori Y."/>
            <person name="Kawabata A."/>
            <person name="Hikiji T."/>
            <person name="Kobatake N."/>
            <person name="Inagaki H."/>
            <person name="Ikema Y."/>
            <person name="Okamoto S."/>
            <person name="Okitani R."/>
            <person name="Kawakami T."/>
            <person name="Noguchi S."/>
            <person name="Itoh T."/>
            <person name="Shigeta K."/>
            <person name="Senba T."/>
            <person name="Matsumura K."/>
            <person name="Nakajima Y."/>
            <person name="Mizuno T."/>
            <person name="Morinaga M."/>
            <person name="Sasaki M."/>
            <person name="Togashi T."/>
            <person name="Oyama M."/>
            <person name="Hata H."/>
            <person name="Watanabe M."/>
            <person name="Komatsu T."/>
            <person name="Mizushima-Sugano J."/>
            <person name="Satoh T."/>
            <person name="Shirai Y."/>
            <person name="Takahashi Y."/>
            <person name="Nakagawa K."/>
            <person name="Okumura K."/>
            <person name="Nagase T."/>
            <person name="Nomura N."/>
            <person name="Kikuchi H."/>
            <person name="Masuho Y."/>
            <person name="Yamashita R."/>
            <person name="Nakai K."/>
            <person name="Yada T."/>
            <person name="Nakamura Y."/>
            <person name="Ohara O."/>
            <person name="Isogai T."/>
            <person name="Sugano S."/>
        </authorList>
    </citation>
    <scope>NUCLEOTIDE SEQUENCE [LARGE SCALE MRNA]</scope>
    <source>
        <tissue>Cerebellum</tissue>
    </source>
</reference>
<reference key="2">
    <citation type="journal article" date="2004" name="Genome Res.">
        <title>The status, quality, and expansion of the NIH full-length cDNA project: the Mammalian Gene Collection (MGC).</title>
        <authorList>
            <consortium name="The MGC Project Team"/>
        </authorList>
    </citation>
    <scope>NUCLEOTIDE SEQUENCE [LARGE SCALE MRNA]</scope>
    <source>
        <tissue>Eye</tissue>
    </source>
</reference>
<accession>Q8NBE8</accession>
<accession>Q8N9B9</accession>
<accession>Q96FT8</accession>
<name>KLH23_HUMAN</name>
<feature type="chain" id="PRO_0000242157" description="Kelch-like protein 23">
    <location>
        <begin position="1"/>
        <end position="558"/>
    </location>
</feature>
<feature type="domain" description="BTB" evidence="1">
    <location>
        <begin position="36"/>
        <end position="104"/>
    </location>
</feature>
<feature type="domain" description="BACK">
    <location>
        <begin position="139"/>
        <end position="240"/>
    </location>
</feature>
<feature type="repeat" description="Kelch 1">
    <location>
        <begin position="274"/>
        <end position="320"/>
    </location>
</feature>
<feature type="repeat" description="Kelch 2">
    <location>
        <begin position="321"/>
        <end position="369"/>
    </location>
</feature>
<feature type="repeat" description="Kelch 3">
    <location>
        <begin position="370"/>
        <end position="416"/>
    </location>
</feature>
<feature type="repeat" description="Kelch 4">
    <location>
        <begin position="418"/>
        <end position="466"/>
    </location>
</feature>
<feature type="repeat" description="Kelch 5">
    <location>
        <begin position="467"/>
        <end position="508"/>
    </location>
</feature>
<feature type="repeat" description="Kelch 6">
    <location>
        <begin position="510"/>
        <end position="557"/>
    </location>
</feature>
<comment type="interaction">
    <interactant intactId="EBI-2512246">
        <id>Q8NBE8</id>
    </interactant>
    <interactant intactId="EBI-21895891">
        <id>Q96NU7</id>
        <label>AMDHD1</label>
    </interactant>
    <organismsDiffer>false</organismsDiffer>
    <experiments>3</experiments>
</comment>
<comment type="interaction">
    <interactant intactId="EBI-2512246">
        <id>Q8NBE8</id>
    </interactant>
    <interactant intactId="EBI-744342">
        <id>Q8IVD9</id>
        <label>NUDCD3</label>
    </interactant>
    <organismsDiffer>false</organismsDiffer>
    <experiments>3</experiments>
</comment>
<comment type="interaction">
    <interactant intactId="EBI-2512246">
        <id>Q8NBE8</id>
    </interactant>
    <interactant intactId="EBI-12157263">
        <id>P40337-2</id>
        <label>VHL</label>
    </interactant>
    <organismsDiffer>false</organismsDiffer>
    <experiments>3</experiments>
</comment>
<comment type="sequence caution" evidence="2">
    <conflict type="erroneous initiation">
        <sequence resource="EMBL-CDS" id="BAC04490"/>
    </conflict>
</comment>
<evidence type="ECO:0000255" key="1">
    <source>
        <dbReference type="PROSITE-ProRule" id="PRU00037"/>
    </source>
</evidence>
<evidence type="ECO:0000305" key="2"/>